<gene>
    <name evidence="2" type="primary">betI</name>
    <name type="ordered locus">YPTB1197</name>
</gene>
<feature type="chain" id="PRO_0000257744" description="HTH-type transcriptional regulator BetI">
    <location>
        <begin position="1"/>
        <end position="198"/>
    </location>
</feature>
<feature type="domain" description="HTH tetR-type" evidence="2">
    <location>
        <begin position="8"/>
        <end position="68"/>
    </location>
</feature>
<feature type="DNA-binding region" description="H-T-H motif" evidence="2">
    <location>
        <begin position="31"/>
        <end position="50"/>
    </location>
</feature>
<name>BETI_YERPS</name>
<protein>
    <recommendedName>
        <fullName evidence="2">HTH-type transcriptional regulator BetI</fullName>
    </recommendedName>
</protein>
<evidence type="ECO:0000250" key="1"/>
<evidence type="ECO:0000255" key="2">
    <source>
        <dbReference type="HAMAP-Rule" id="MF_00768"/>
    </source>
</evidence>
<comment type="function">
    <text evidence="1">Repressor involved in the biosynthesis of the osmoprotectant glycine betaine. It represses transcription of the choline transporter BetT and the genes of BetAB involved in the synthesis of glycine betaine (By similarity).</text>
</comment>
<comment type="pathway">
    <text>Amine and polyamine biosynthesis; betaine biosynthesis via choline pathway [regulation].</text>
</comment>
<accession>Q66D52</accession>
<proteinExistence type="inferred from homology"/>
<sequence length="198" mass="22428">MPKVGMQPIRRQQLIEATMAAVNEVGMHEASIAQIAKRAGVSNGIISHYFRDKNGLLEATMRYLIRHLGEAVKQHLAALSVNDPRARLRAIAEGNFDDSQINSAAMKTWLAFWASSMHSPQLYRLQQVNNRRLYSNLCAEFKRCLPREQAQLAAKGMAGLIDGLWLRSALSGEHFNRQEALLIIHNYIEQQLNIKYKC</sequence>
<organism>
    <name type="scientific">Yersinia pseudotuberculosis serotype I (strain IP32953)</name>
    <dbReference type="NCBI Taxonomy" id="273123"/>
    <lineage>
        <taxon>Bacteria</taxon>
        <taxon>Pseudomonadati</taxon>
        <taxon>Pseudomonadota</taxon>
        <taxon>Gammaproteobacteria</taxon>
        <taxon>Enterobacterales</taxon>
        <taxon>Yersiniaceae</taxon>
        <taxon>Yersinia</taxon>
    </lineage>
</organism>
<dbReference type="EMBL" id="BX936398">
    <property type="protein sequence ID" value="CAH20437.1"/>
    <property type="molecule type" value="Genomic_DNA"/>
</dbReference>
<dbReference type="RefSeq" id="WP_002218278.1">
    <property type="nucleotide sequence ID" value="NZ_CP009712.1"/>
</dbReference>
<dbReference type="SMR" id="Q66D52"/>
<dbReference type="GeneID" id="57977306"/>
<dbReference type="KEGG" id="ypo:BZ17_1330"/>
<dbReference type="KEGG" id="yps:YPTB1197"/>
<dbReference type="PATRIC" id="fig|273123.14.peg.1421"/>
<dbReference type="UniPathway" id="UPA00529"/>
<dbReference type="Proteomes" id="UP000001011">
    <property type="component" value="Chromosome"/>
</dbReference>
<dbReference type="GO" id="GO:0003700">
    <property type="term" value="F:DNA-binding transcription factor activity"/>
    <property type="evidence" value="ECO:0007669"/>
    <property type="project" value="UniProtKB-UniRule"/>
</dbReference>
<dbReference type="GO" id="GO:0000976">
    <property type="term" value="F:transcription cis-regulatory region binding"/>
    <property type="evidence" value="ECO:0007669"/>
    <property type="project" value="TreeGrafter"/>
</dbReference>
<dbReference type="GO" id="GO:0019285">
    <property type="term" value="P:glycine betaine biosynthetic process from choline"/>
    <property type="evidence" value="ECO:0007669"/>
    <property type="project" value="UniProtKB-UniRule"/>
</dbReference>
<dbReference type="GO" id="GO:0045892">
    <property type="term" value="P:negative regulation of DNA-templated transcription"/>
    <property type="evidence" value="ECO:0007669"/>
    <property type="project" value="UniProtKB-UniRule"/>
</dbReference>
<dbReference type="Gene3D" id="1.10.357.10">
    <property type="entry name" value="Tetracycline Repressor, domain 2"/>
    <property type="match status" value="1"/>
</dbReference>
<dbReference type="HAMAP" id="MF_00768">
    <property type="entry name" value="HTH_type_BetI"/>
    <property type="match status" value="1"/>
</dbReference>
<dbReference type="InterPro" id="IPR039538">
    <property type="entry name" value="BetI_C"/>
</dbReference>
<dbReference type="InterPro" id="IPR023772">
    <property type="entry name" value="DNA-bd_HTH_TetR-type_CS"/>
</dbReference>
<dbReference type="InterPro" id="IPR009057">
    <property type="entry name" value="Homeodomain-like_sf"/>
</dbReference>
<dbReference type="InterPro" id="IPR050109">
    <property type="entry name" value="HTH-type_TetR-like_transc_reg"/>
</dbReference>
<dbReference type="InterPro" id="IPR001647">
    <property type="entry name" value="HTH_TetR"/>
</dbReference>
<dbReference type="InterPro" id="IPR036271">
    <property type="entry name" value="Tet_transcr_reg_TetR-rel_C_sf"/>
</dbReference>
<dbReference type="InterPro" id="IPR017757">
    <property type="entry name" value="Tscrpt_rep_BetI"/>
</dbReference>
<dbReference type="NCBIfam" id="TIGR03384">
    <property type="entry name" value="betaine_BetI"/>
    <property type="match status" value="1"/>
</dbReference>
<dbReference type="NCBIfam" id="NF001978">
    <property type="entry name" value="PRK00767.1"/>
    <property type="match status" value="1"/>
</dbReference>
<dbReference type="PANTHER" id="PTHR30055:SF234">
    <property type="entry name" value="HTH-TYPE TRANSCRIPTIONAL REGULATOR BETI"/>
    <property type="match status" value="1"/>
</dbReference>
<dbReference type="PANTHER" id="PTHR30055">
    <property type="entry name" value="HTH-TYPE TRANSCRIPTIONAL REGULATOR RUTR"/>
    <property type="match status" value="1"/>
</dbReference>
<dbReference type="Pfam" id="PF13977">
    <property type="entry name" value="TetR_C_6"/>
    <property type="match status" value="1"/>
</dbReference>
<dbReference type="Pfam" id="PF00440">
    <property type="entry name" value="TetR_N"/>
    <property type="match status" value="1"/>
</dbReference>
<dbReference type="PRINTS" id="PR00455">
    <property type="entry name" value="HTHTETR"/>
</dbReference>
<dbReference type="SUPFAM" id="SSF46689">
    <property type="entry name" value="Homeodomain-like"/>
    <property type="match status" value="1"/>
</dbReference>
<dbReference type="SUPFAM" id="SSF48498">
    <property type="entry name" value="Tetracyclin repressor-like, C-terminal domain"/>
    <property type="match status" value="1"/>
</dbReference>
<dbReference type="PROSITE" id="PS01081">
    <property type="entry name" value="HTH_TETR_1"/>
    <property type="match status" value="1"/>
</dbReference>
<dbReference type="PROSITE" id="PS50977">
    <property type="entry name" value="HTH_TETR_2"/>
    <property type="match status" value="1"/>
</dbReference>
<keyword id="KW-0238">DNA-binding</keyword>
<keyword id="KW-0678">Repressor</keyword>
<keyword id="KW-0804">Transcription</keyword>
<keyword id="KW-0805">Transcription regulation</keyword>
<reference key="1">
    <citation type="journal article" date="2004" name="Proc. Natl. Acad. Sci. U.S.A.">
        <title>Insights into the evolution of Yersinia pestis through whole-genome comparison with Yersinia pseudotuberculosis.</title>
        <authorList>
            <person name="Chain P.S.G."/>
            <person name="Carniel E."/>
            <person name="Larimer F.W."/>
            <person name="Lamerdin J."/>
            <person name="Stoutland P.O."/>
            <person name="Regala W.M."/>
            <person name="Georgescu A.M."/>
            <person name="Vergez L.M."/>
            <person name="Land M.L."/>
            <person name="Motin V.L."/>
            <person name="Brubaker R.R."/>
            <person name="Fowler J."/>
            <person name="Hinnebusch J."/>
            <person name="Marceau M."/>
            <person name="Medigue C."/>
            <person name="Simonet M."/>
            <person name="Chenal-Francisque V."/>
            <person name="Souza B."/>
            <person name="Dacheux D."/>
            <person name="Elliott J.M."/>
            <person name="Derbise A."/>
            <person name="Hauser L.J."/>
            <person name="Garcia E."/>
        </authorList>
    </citation>
    <scope>NUCLEOTIDE SEQUENCE [LARGE SCALE GENOMIC DNA]</scope>
    <source>
        <strain>IP32953</strain>
    </source>
</reference>